<protein>
    <recommendedName>
        <fullName>2-iminoacetate synthase</fullName>
        <ecNumber>4.1.99.19</ecNumber>
    </recommendedName>
    <alternativeName>
        <fullName>Dehydroglycine synthase</fullName>
    </alternativeName>
    <alternativeName>
        <fullName>Tyrosine lyase</fullName>
    </alternativeName>
</protein>
<sequence length="377" mass="43447">MKTFTDRWRQLEWDDIRLRINGKTAADVERALNAAHLSRDDLMALLSPAAADYLEPIAQRAQRLTRQRFGNTVSFYVPLYLSNLCANDCTYCGFSMSNRIKRKTLDEVDIQRECDAIRKLGFEHLLLVTGEHQAKVGMDYFRRHLPTIRRQFSSLQMEVQPLSQENYAELKTLGIDGVMVYQETYHEAIYAQHHLKGKKQDFFWRLETPDRLGRAGIDKIGLGALIGLSDNWRVDCYMVAEHLLWMQKHYWQSRYSVSFPRLRPCTGGVEPASVMDEKQLVQTICAFRLLAPEIELSLSTRESPWFRDHVIPLAINNVSAFSKTQPGGYADDHPELEQFSPHDARRPETVASALSAQGLQPVWKDWDSWLGRASQTR</sequence>
<accession>Q9S498</accession>
<dbReference type="EC" id="4.1.99.19"/>
<dbReference type="EMBL" id="AF154064">
    <property type="protein sequence ID" value="AAD48429.1"/>
    <property type="molecule type" value="Genomic_DNA"/>
</dbReference>
<dbReference type="EMBL" id="AF170176">
    <property type="protein sequence ID" value="AAF33524.1"/>
    <property type="molecule type" value="Genomic_DNA"/>
</dbReference>
<dbReference type="EMBL" id="AE006468">
    <property type="protein sequence ID" value="AAL22987.1"/>
    <property type="molecule type" value="Genomic_DNA"/>
</dbReference>
<dbReference type="RefSeq" id="NP_463028.1">
    <property type="nucleotide sequence ID" value="NC_003197.2"/>
</dbReference>
<dbReference type="RefSeq" id="WP_000847565.1">
    <property type="nucleotide sequence ID" value="NC_003197.2"/>
</dbReference>
<dbReference type="SMR" id="Q9S498"/>
<dbReference type="STRING" id="99287.STM4159"/>
<dbReference type="PaxDb" id="99287-STM4159"/>
<dbReference type="DNASU" id="1255685"/>
<dbReference type="GeneID" id="1255685"/>
<dbReference type="KEGG" id="stm:STM4159"/>
<dbReference type="PATRIC" id="fig|99287.12.peg.4373"/>
<dbReference type="HOGENOM" id="CLU_046249_1_0_6"/>
<dbReference type="OMA" id="YLAMEVQ"/>
<dbReference type="PhylomeDB" id="Q9S498"/>
<dbReference type="BioCyc" id="SENT99287:STM4159-MONOMER"/>
<dbReference type="BRENDA" id="4.1.99.19">
    <property type="organism ID" value="5542"/>
</dbReference>
<dbReference type="UniPathway" id="UPA00060"/>
<dbReference type="Proteomes" id="UP000001014">
    <property type="component" value="Chromosome"/>
</dbReference>
<dbReference type="GO" id="GO:0036355">
    <property type="term" value="F:2-iminoacetate synthase activity"/>
    <property type="evidence" value="ECO:0007669"/>
    <property type="project" value="UniProtKB-EC"/>
</dbReference>
<dbReference type="GO" id="GO:0051539">
    <property type="term" value="F:4 iron, 4 sulfur cluster binding"/>
    <property type="evidence" value="ECO:0007669"/>
    <property type="project" value="UniProtKB-KW"/>
</dbReference>
<dbReference type="GO" id="GO:0005506">
    <property type="term" value="F:iron ion binding"/>
    <property type="evidence" value="ECO:0007669"/>
    <property type="project" value="InterPro"/>
</dbReference>
<dbReference type="GO" id="GO:0009229">
    <property type="term" value="P:thiamine diphosphate biosynthetic process"/>
    <property type="evidence" value="ECO:0007669"/>
    <property type="project" value="UniProtKB-UniPathway"/>
</dbReference>
<dbReference type="CDD" id="cd01335">
    <property type="entry name" value="Radical_SAM"/>
    <property type="match status" value="1"/>
</dbReference>
<dbReference type="FunFam" id="3.20.20.70:FF:000122">
    <property type="entry name" value="2-iminoacetate synthase ThiH"/>
    <property type="match status" value="1"/>
</dbReference>
<dbReference type="Gene3D" id="3.20.20.70">
    <property type="entry name" value="Aldolase class I"/>
    <property type="match status" value="1"/>
</dbReference>
<dbReference type="InterPro" id="IPR013785">
    <property type="entry name" value="Aldolase_TIM"/>
</dbReference>
<dbReference type="InterPro" id="IPR010722">
    <property type="entry name" value="BATS_dom"/>
</dbReference>
<dbReference type="InterPro" id="IPR007197">
    <property type="entry name" value="rSAM"/>
</dbReference>
<dbReference type="InterPro" id="IPR012726">
    <property type="entry name" value="ThiH"/>
</dbReference>
<dbReference type="InterPro" id="IPR034428">
    <property type="entry name" value="ThiH/NoCL/HydG-like"/>
</dbReference>
<dbReference type="NCBIfam" id="TIGR02351">
    <property type="entry name" value="thiH"/>
    <property type="match status" value="1"/>
</dbReference>
<dbReference type="PANTHER" id="PTHR43583">
    <property type="entry name" value="2-IMINOACETATE SYNTHASE"/>
    <property type="match status" value="1"/>
</dbReference>
<dbReference type="PANTHER" id="PTHR43583:SF1">
    <property type="entry name" value="2-IMINOACETATE SYNTHASE"/>
    <property type="match status" value="1"/>
</dbReference>
<dbReference type="Pfam" id="PF06968">
    <property type="entry name" value="BATS"/>
    <property type="match status" value="1"/>
</dbReference>
<dbReference type="Pfam" id="PF04055">
    <property type="entry name" value="Radical_SAM"/>
    <property type="match status" value="1"/>
</dbReference>
<dbReference type="SFLD" id="SFLDF00301">
    <property type="entry name" value="2-iminoacetate_synthase_(ThiH)"/>
    <property type="match status" value="1"/>
</dbReference>
<dbReference type="SFLD" id="SFLDG01081">
    <property type="entry name" value="cleavage_of_the_Ca-Cb_bond_in"/>
    <property type="match status" value="1"/>
</dbReference>
<dbReference type="SMART" id="SM00876">
    <property type="entry name" value="BATS"/>
    <property type="match status" value="1"/>
</dbReference>
<dbReference type="SUPFAM" id="SSF102114">
    <property type="entry name" value="Radical SAM enzymes"/>
    <property type="match status" value="1"/>
</dbReference>
<dbReference type="PROSITE" id="PS51918">
    <property type="entry name" value="RADICAL_SAM"/>
    <property type="match status" value="1"/>
</dbReference>
<evidence type="ECO:0000250" key="1"/>
<evidence type="ECO:0000255" key="2">
    <source>
        <dbReference type="PROSITE-ProRule" id="PRU01266"/>
    </source>
</evidence>
<evidence type="ECO:0000269" key="3">
    <source>
    </source>
</evidence>
<evidence type="ECO:0000305" key="4"/>
<keyword id="KW-0004">4Fe-4S</keyword>
<keyword id="KW-0408">Iron</keyword>
<keyword id="KW-0411">Iron-sulfur</keyword>
<keyword id="KW-0456">Lyase</keyword>
<keyword id="KW-0479">Metal-binding</keyword>
<keyword id="KW-0521">NADP</keyword>
<keyword id="KW-1185">Reference proteome</keyword>
<keyword id="KW-0949">S-adenosyl-L-methionine</keyword>
<keyword id="KW-0784">Thiamine biosynthesis</keyword>
<organism>
    <name type="scientific">Salmonella typhimurium (strain LT2 / SGSC1412 / ATCC 700720)</name>
    <dbReference type="NCBI Taxonomy" id="99287"/>
    <lineage>
        <taxon>Bacteria</taxon>
        <taxon>Pseudomonadati</taxon>
        <taxon>Pseudomonadota</taxon>
        <taxon>Gammaproteobacteria</taxon>
        <taxon>Enterobacterales</taxon>
        <taxon>Enterobacteriaceae</taxon>
        <taxon>Salmonella</taxon>
    </lineage>
</organism>
<name>THIH_SALTY</name>
<gene>
    <name type="primary">thiH</name>
    <name type="ordered locus">STM4159</name>
    <name type="ORF">STMF1.38</name>
</gene>
<feature type="chain" id="PRO_0000072515" description="2-iminoacetate synthase">
    <location>
        <begin position="1"/>
        <end position="377"/>
    </location>
</feature>
<feature type="domain" description="Radical SAM core" evidence="2">
    <location>
        <begin position="71"/>
        <end position="301"/>
    </location>
</feature>
<feature type="binding site" evidence="1">
    <location>
        <position position="85"/>
    </location>
    <ligand>
        <name>[4Fe-4S] cluster</name>
        <dbReference type="ChEBI" id="CHEBI:49883"/>
        <note>4Fe-4S-S-AdoMet</note>
    </ligand>
</feature>
<feature type="binding site" evidence="1">
    <location>
        <position position="89"/>
    </location>
    <ligand>
        <name>[4Fe-4S] cluster</name>
        <dbReference type="ChEBI" id="CHEBI:49883"/>
        <note>4Fe-4S-S-AdoMet</note>
    </ligand>
</feature>
<feature type="binding site" evidence="1">
    <location>
        <position position="92"/>
    </location>
    <ligand>
        <name>[4Fe-4S] cluster</name>
        <dbReference type="ChEBI" id="CHEBI:49883"/>
        <note>4Fe-4S-S-AdoMet</note>
    </ligand>
</feature>
<feature type="mutagenesis site" description="No activity." evidence="3">
    <original>D</original>
    <variation>V</variation>
    <location>
        <position position="41"/>
    </location>
</feature>
<feature type="mutagenesis site" description="No activity." evidence="3">
    <original>A</original>
    <variation>T</variation>
    <location>
        <position position="50"/>
    </location>
</feature>
<feature type="mutagenesis site" description="No activity." evidence="3">
    <original>A</original>
    <variation>T</variation>
    <location>
        <position position="61"/>
    </location>
</feature>
<feature type="mutagenesis site" description="No activity." evidence="3">
    <original>N</original>
    <variation>A</variation>
    <variation>K</variation>
    <location>
        <position position="87"/>
    </location>
</feature>
<feature type="mutagenesis site" description="No activity." evidence="3">
    <original>C</original>
    <variation>A</variation>
    <location>
        <position position="89"/>
    </location>
</feature>
<feature type="mutagenesis site" description="No activity." evidence="3">
    <original>Y</original>
    <variation>A</variation>
    <location>
        <position position="91"/>
    </location>
</feature>
<feature type="mutagenesis site" description="No activity." evidence="3">
    <original>R</original>
    <variation>P</variation>
    <location>
        <position position="102"/>
    </location>
</feature>
<feature type="mutagenesis site" description="No activity." evidence="3">
    <original>G</original>
    <variation>A</variation>
    <location>
        <position position="130"/>
    </location>
</feature>
<feature type="mutagenesis site" description="No activity." evidence="3">
    <original>E</original>
    <variation>A</variation>
    <variation>K</variation>
    <location>
        <position position="131"/>
    </location>
</feature>
<feature type="mutagenesis site" description="No activity." evidence="3">
    <original>E</original>
    <variation>D</variation>
    <location>
        <position position="187"/>
    </location>
</feature>
<feature type="mutagenesis site" description="No activity." evidence="3">
    <original>C</original>
    <variation>H</variation>
    <location>
        <position position="285"/>
    </location>
</feature>
<feature type="mutagenesis site" description="No activity." evidence="3">
    <original>Q</original>
    <variation>L</variation>
    <location>
        <position position="338"/>
    </location>
</feature>
<feature type="mutagenesis site" description="No activity." evidence="3">
    <original>W</original>
    <variation>C</variation>
    <location>
        <position position="363"/>
    </location>
</feature>
<reference key="1">
    <citation type="submission" date="1999-05" db="EMBL/GenBank/DDBJ databases">
        <title>Genetic evidence for the role of ThiH in thiazole synthesis: a model to explain conditional thiazole auxotrophs.</title>
        <authorList>
            <person name="Webb E.A."/>
            <person name="Downs D.M."/>
        </authorList>
    </citation>
    <scope>NUCLEOTIDE SEQUENCE [GENOMIC DNA]</scope>
    <source>
        <strain>LT2</strain>
    </source>
</reference>
<reference key="2">
    <citation type="journal article" date="2001" name="Nature">
        <title>Complete genome sequence of Salmonella enterica serovar Typhimurium LT2.</title>
        <authorList>
            <person name="McClelland M."/>
            <person name="Sanderson K.E."/>
            <person name="Spieth J."/>
            <person name="Clifton S.W."/>
            <person name="Latreille P."/>
            <person name="Courtney L."/>
            <person name="Porwollik S."/>
            <person name="Ali J."/>
            <person name="Dante M."/>
            <person name="Du F."/>
            <person name="Hou S."/>
            <person name="Layman D."/>
            <person name="Leonard S."/>
            <person name="Nguyen C."/>
            <person name="Scott K."/>
            <person name="Holmes A."/>
            <person name="Grewal N."/>
            <person name="Mulvaney E."/>
            <person name="Ryan E."/>
            <person name="Sun H."/>
            <person name="Florea L."/>
            <person name="Miller W."/>
            <person name="Stoneking T."/>
            <person name="Nhan M."/>
            <person name="Waterston R."/>
            <person name="Wilson R.K."/>
        </authorList>
    </citation>
    <scope>NUCLEOTIDE SEQUENCE [LARGE SCALE GENOMIC DNA]</scope>
    <source>
        <strain>LT2 / SGSC1412 / ATCC 700720</strain>
    </source>
</reference>
<reference key="3">
    <citation type="journal article" date="2004" name="J. Biol. Chem.">
        <title>Mutational analysis of ThiH, a member of the radical S-adenosylmethionine (AdoMet) protein superfamily.</title>
        <authorList>
            <person name="Martinez-Gomez N.C."/>
            <person name="Robers M."/>
            <person name="Downs D.M."/>
        </authorList>
    </citation>
    <scope>FUNCTION</scope>
    <scope>MUTAGENESIS OF ASP-41; ALA-50; ALA-61; ASN-87; CYS-89; TYR-91; ARG-102; GLY-130; GLU-131; GLU-187; CYS-285; GLN-338 AND TRP-363</scope>
    <source>
        <strain>LT2 / DM1</strain>
    </source>
</reference>
<comment type="function">
    <text evidence="3">Catalyzes the radical-mediated cleavage of tyrosine to 2-iminoacetate and 4-cresol.</text>
</comment>
<comment type="catalytic activity">
    <reaction>
        <text>L-tyrosine + S-adenosyl-L-methionine + NADPH = 2-iminoacetate + 4-methylphenol + 5'-deoxyadenosine + L-methionine + NADP(+)</text>
        <dbReference type="Rhea" id="RHEA:26361"/>
        <dbReference type="ChEBI" id="CHEBI:17319"/>
        <dbReference type="ChEBI" id="CHEBI:17847"/>
        <dbReference type="ChEBI" id="CHEBI:57783"/>
        <dbReference type="ChEBI" id="CHEBI:57844"/>
        <dbReference type="ChEBI" id="CHEBI:58315"/>
        <dbReference type="ChEBI" id="CHEBI:58349"/>
        <dbReference type="ChEBI" id="CHEBI:59789"/>
        <dbReference type="ChEBI" id="CHEBI:77846"/>
        <dbReference type="EC" id="4.1.99.19"/>
    </reaction>
</comment>
<comment type="cofactor">
    <cofactor evidence="1">
        <name>[4Fe-4S] cluster</name>
        <dbReference type="ChEBI" id="CHEBI:49883"/>
    </cofactor>
    <text evidence="1">Binds 1 [4Fe-4S] cluster per subunit. The cluster is coordinated with 3 cysteines and an exchangeable S-adenosyl-L-methionine.</text>
</comment>
<comment type="pathway">
    <text>Cofactor biosynthesis; thiamine diphosphate biosynthesis.</text>
</comment>
<comment type="subunit">
    <text evidence="1">Forms a heterodimer with ThiG.</text>
</comment>
<comment type="miscellaneous">
    <text>The product 2-iminoacetate hydrates in vitro to yield glyoxylate and ammonium.</text>
</comment>
<comment type="similarity">
    <text evidence="4">Belongs to the radical SAM superfamily. ThiH family.</text>
</comment>
<proteinExistence type="evidence at protein level"/>